<evidence type="ECO:0000250" key="1"/>
<evidence type="ECO:0000250" key="2">
    <source>
        <dbReference type="UniProtKB" id="P16871"/>
    </source>
</evidence>
<evidence type="ECO:0000255" key="3"/>
<evidence type="ECO:0000255" key="4">
    <source>
        <dbReference type="PROSITE-ProRule" id="PRU00316"/>
    </source>
</evidence>
<evidence type="ECO:0000256" key="5">
    <source>
        <dbReference type="SAM" id="MobiDB-lite"/>
    </source>
</evidence>
<evidence type="ECO:0000305" key="6"/>
<keyword id="KW-1003">Cell membrane</keyword>
<keyword id="KW-1015">Disulfide bond</keyword>
<keyword id="KW-0325">Glycoprotein</keyword>
<keyword id="KW-0472">Membrane</keyword>
<keyword id="KW-0597">Phosphoprotein</keyword>
<keyword id="KW-0675">Receptor</keyword>
<keyword id="KW-1185">Reference proteome</keyword>
<keyword id="KW-0732">Signal</keyword>
<keyword id="KW-0812">Transmembrane</keyword>
<keyword id="KW-1133">Transmembrane helix</keyword>
<keyword id="KW-0832">Ubl conjugation</keyword>
<feature type="signal peptide" evidence="3">
    <location>
        <begin position="1"/>
        <end position="20"/>
    </location>
</feature>
<feature type="chain" id="PRO_0000369415" description="Interleukin-7 receptor subunit alpha">
    <location>
        <begin position="21"/>
        <end position="459"/>
    </location>
</feature>
<feature type="topological domain" description="Extracellular" evidence="3">
    <location>
        <begin position="21"/>
        <end position="241"/>
    </location>
</feature>
<feature type="transmembrane region" description="Helical" evidence="3">
    <location>
        <begin position="242"/>
        <end position="262"/>
    </location>
</feature>
<feature type="topological domain" description="Cytoplasmic" evidence="3">
    <location>
        <begin position="263"/>
        <end position="459"/>
    </location>
</feature>
<feature type="domain" description="Fibronectin type-III" evidence="4">
    <location>
        <begin position="131"/>
        <end position="231"/>
    </location>
</feature>
<feature type="region of interest" description="Disordered" evidence="5">
    <location>
        <begin position="327"/>
        <end position="357"/>
    </location>
</feature>
<feature type="short sequence motif" description="WSXWS motif" evidence="1">
    <location>
        <begin position="217"/>
        <end position="221"/>
    </location>
</feature>
<feature type="short sequence motif" description="Box 1 motif" evidence="1">
    <location>
        <begin position="272"/>
        <end position="280"/>
    </location>
</feature>
<feature type="compositionally biased region" description="Polar residues" evidence="5">
    <location>
        <begin position="345"/>
        <end position="357"/>
    </location>
</feature>
<feature type="modified residue" description="Phosphothreonine; by PKC" evidence="3">
    <location>
        <position position="282"/>
    </location>
</feature>
<feature type="glycosylation site" description="N-linked (GlcNAc...) asparagine" evidence="3">
    <location>
        <position position="49"/>
    </location>
</feature>
<feature type="glycosylation site" description="N-linked (GlcNAc...) asparagine" evidence="3">
    <location>
        <position position="65"/>
    </location>
</feature>
<feature type="glycosylation site" description="N-linked (GlcNAc...) asparagine" evidence="3">
    <location>
        <position position="182"/>
    </location>
</feature>
<feature type="disulfide bond" evidence="1">
    <location>
        <begin position="42"/>
        <end position="57"/>
    </location>
</feature>
<feature type="disulfide bond" evidence="1">
    <location>
        <begin position="74"/>
        <end position="82"/>
    </location>
</feature>
<feature type="disulfide bond" evidence="1">
    <location>
        <begin position="108"/>
        <end position="118"/>
    </location>
</feature>
<protein>
    <recommendedName>
        <fullName>Interleukin-7 receptor subunit alpha</fullName>
        <shortName>IL-7 receptor subunit alpha</shortName>
        <shortName>IL-7R subunit alpha</shortName>
        <shortName>IL-7R-alpha</shortName>
        <shortName>IL-7RA</shortName>
    </recommendedName>
    <cdAntigenName>CD127</cdAntigenName>
</protein>
<name>IL7RA_CALJA</name>
<gene>
    <name type="primary">IL7R</name>
</gene>
<accession>A5HJM1</accession>
<reference key="1">
    <citation type="submission" date="2007-04" db="EMBL/GenBank/DDBJ databases">
        <authorList>
            <person name="Matsuzawa A."/>
            <person name="Kohu K."/>
            <person name="Suemizu H."/>
            <person name="Sasaki E."/>
            <person name="Yagita H."/>
            <person name="Suzuki D."/>
            <person name="Kametani Y."/>
            <person name="Habu S."/>
            <person name="Satake M."/>
        </authorList>
    </citation>
    <scope>NUCLEOTIDE SEQUENCE [MRNA]</scope>
</reference>
<dbReference type="EMBL" id="EF534213">
    <property type="protein sequence ID" value="ABQ09497.1"/>
    <property type="molecule type" value="mRNA"/>
</dbReference>
<dbReference type="RefSeq" id="XP_002745108.1">
    <property type="nucleotide sequence ID" value="XM_002745062.5"/>
</dbReference>
<dbReference type="SMR" id="A5HJM1"/>
<dbReference type="FunCoup" id="A5HJM1">
    <property type="interactions" value="1018"/>
</dbReference>
<dbReference type="STRING" id="9483.ENSCJAP00000034071"/>
<dbReference type="GlyCosmos" id="A5HJM1">
    <property type="glycosylation" value="3 sites, No reported glycans"/>
</dbReference>
<dbReference type="Ensembl" id="ENSCJAT00000035995.5">
    <property type="protein sequence ID" value="ENSCJAP00000034071.2"/>
    <property type="gene ID" value="ENSCJAG00000018379.5"/>
</dbReference>
<dbReference type="GeneID" id="100397720"/>
<dbReference type="KEGG" id="cjc:100397720"/>
<dbReference type="CTD" id="3575"/>
<dbReference type="eggNOG" id="ENOG502S4WE">
    <property type="taxonomic scope" value="Eukaryota"/>
</dbReference>
<dbReference type="GeneTree" id="ENSGT00510000048500"/>
<dbReference type="HOGENOM" id="CLU_045398_0_0_1"/>
<dbReference type="InParanoid" id="A5HJM1"/>
<dbReference type="OMA" id="QIHRVDD"/>
<dbReference type="OrthoDB" id="8611929at2759"/>
<dbReference type="TreeFam" id="TF336573"/>
<dbReference type="Proteomes" id="UP000008225">
    <property type="component" value="Chromosome 2"/>
</dbReference>
<dbReference type="Bgee" id="ENSCJAG00000018379">
    <property type="expression patterns" value="Expressed in liver and 3 other cell types or tissues"/>
</dbReference>
<dbReference type="GO" id="GO:0005829">
    <property type="term" value="C:cytosol"/>
    <property type="evidence" value="ECO:0007669"/>
    <property type="project" value="Ensembl"/>
</dbReference>
<dbReference type="GO" id="GO:0009897">
    <property type="term" value="C:external side of plasma membrane"/>
    <property type="evidence" value="ECO:0007669"/>
    <property type="project" value="Ensembl"/>
</dbReference>
<dbReference type="GO" id="GO:0005654">
    <property type="term" value="C:nucleoplasm"/>
    <property type="evidence" value="ECO:0007669"/>
    <property type="project" value="Ensembl"/>
</dbReference>
<dbReference type="GO" id="GO:0004917">
    <property type="term" value="F:interleukin-7 receptor activity"/>
    <property type="evidence" value="ECO:0007669"/>
    <property type="project" value="Ensembl"/>
</dbReference>
<dbReference type="GO" id="GO:0001782">
    <property type="term" value="P:B cell homeostasis"/>
    <property type="evidence" value="ECO:0007669"/>
    <property type="project" value="Ensembl"/>
</dbReference>
<dbReference type="GO" id="GO:0042100">
    <property type="term" value="P:B cell proliferation"/>
    <property type="evidence" value="ECO:0007669"/>
    <property type="project" value="Ensembl"/>
</dbReference>
<dbReference type="GO" id="GO:0000902">
    <property type="term" value="P:cell morphogenesis"/>
    <property type="evidence" value="ECO:0007669"/>
    <property type="project" value="Ensembl"/>
</dbReference>
<dbReference type="GO" id="GO:0019725">
    <property type="term" value="P:cellular homeostasis"/>
    <property type="evidence" value="ECO:0007669"/>
    <property type="project" value="Ensembl"/>
</dbReference>
<dbReference type="GO" id="GO:0050830">
    <property type="term" value="P:defense response to Gram-positive bacterium"/>
    <property type="evidence" value="ECO:0007669"/>
    <property type="project" value="Ensembl"/>
</dbReference>
<dbReference type="GO" id="GO:0010467">
    <property type="term" value="P:gene expression"/>
    <property type="evidence" value="ECO:0007669"/>
    <property type="project" value="Ensembl"/>
</dbReference>
<dbReference type="GO" id="GO:0048535">
    <property type="term" value="P:lymph node development"/>
    <property type="evidence" value="ECO:0007669"/>
    <property type="project" value="Ensembl"/>
</dbReference>
<dbReference type="GO" id="GO:0070233">
    <property type="term" value="P:negative regulation of T cell apoptotic process"/>
    <property type="evidence" value="ECO:0007669"/>
    <property type="project" value="Ensembl"/>
</dbReference>
<dbReference type="GO" id="GO:0001915">
    <property type="term" value="P:negative regulation of T cell mediated cytotoxicity"/>
    <property type="evidence" value="ECO:0007669"/>
    <property type="project" value="Ensembl"/>
</dbReference>
<dbReference type="GO" id="GO:0008284">
    <property type="term" value="P:positive regulation of cell population proliferation"/>
    <property type="evidence" value="ECO:0007669"/>
    <property type="project" value="Ensembl"/>
</dbReference>
<dbReference type="GO" id="GO:0010628">
    <property type="term" value="P:positive regulation of gene expression"/>
    <property type="evidence" value="ECO:0007669"/>
    <property type="project" value="Ensembl"/>
</dbReference>
<dbReference type="GO" id="GO:0046427">
    <property type="term" value="P:positive regulation of receptor signaling pathway via JAK-STAT"/>
    <property type="evidence" value="ECO:0007669"/>
    <property type="project" value="TreeGrafter"/>
</dbReference>
<dbReference type="GO" id="GO:0033089">
    <property type="term" value="P:positive regulation of T cell differentiation in thymus"/>
    <property type="evidence" value="ECO:0007669"/>
    <property type="project" value="Ensembl"/>
</dbReference>
<dbReference type="GO" id="GO:0008361">
    <property type="term" value="P:regulation of cell size"/>
    <property type="evidence" value="ECO:0007669"/>
    <property type="project" value="Ensembl"/>
</dbReference>
<dbReference type="GO" id="GO:0033077">
    <property type="term" value="P:T cell differentiation in thymus"/>
    <property type="evidence" value="ECO:0007669"/>
    <property type="project" value="Ensembl"/>
</dbReference>
<dbReference type="GO" id="GO:0043029">
    <property type="term" value="P:T cell homeostasis"/>
    <property type="evidence" value="ECO:0007669"/>
    <property type="project" value="Ensembl"/>
</dbReference>
<dbReference type="GO" id="GO:0001913">
    <property type="term" value="P:T cell mediated cytotoxicity"/>
    <property type="evidence" value="ECO:0007669"/>
    <property type="project" value="Ensembl"/>
</dbReference>
<dbReference type="CDD" id="cd00063">
    <property type="entry name" value="FN3"/>
    <property type="match status" value="1"/>
</dbReference>
<dbReference type="FunFam" id="2.60.40.10:FF:001443">
    <property type="entry name" value="Interleukin-7 receptor subunit alpha"/>
    <property type="match status" value="1"/>
</dbReference>
<dbReference type="FunFam" id="2.60.40.1870:FF:000001">
    <property type="entry name" value="Interleukin-7 receptor subunit alpha"/>
    <property type="match status" value="1"/>
</dbReference>
<dbReference type="Gene3D" id="2.60.40.1870">
    <property type="match status" value="1"/>
</dbReference>
<dbReference type="Gene3D" id="2.60.40.10">
    <property type="entry name" value="Immunoglobulins"/>
    <property type="match status" value="1"/>
</dbReference>
<dbReference type="InterPro" id="IPR040997">
    <property type="entry name" value="FN3_7"/>
</dbReference>
<dbReference type="InterPro" id="IPR003961">
    <property type="entry name" value="FN3_dom"/>
</dbReference>
<dbReference type="InterPro" id="IPR036116">
    <property type="entry name" value="FN3_sf"/>
</dbReference>
<dbReference type="InterPro" id="IPR003531">
    <property type="entry name" value="Hempt_rcpt_S_F1_CS"/>
</dbReference>
<dbReference type="InterPro" id="IPR013783">
    <property type="entry name" value="Ig-like_fold"/>
</dbReference>
<dbReference type="PANTHER" id="PTHR23037">
    <property type="entry name" value="CYTOKINE RECEPTOR"/>
    <property type="match status" value="1"/>
</dbReference>
<dbReference type="PANTHER" id="PTHR23037:SF27">
    <property type="entry name" value="INTERLEUKIN-7 RECEPTOR SUBUNIT ALPHA"/>
    <property type="match status" value="1"/>
</dbReference>
<dbReference type="Pfam" id="PF18447">
    <property type="entry name" value="FN3_7"/>
    <property type="match status" value="1"/>
</dbReference>
<dbReference type="SUPFAM" id="SSF49265">
    <property type="entry name" value="Fibronectin type III"/>
    <property type="match status" value="1"/>
</dbReference>
<dbReference type="PROSITE" id="PS50853">
    <property type="entry name" value="FN3"/>
    <property type="match status" value="1"/>
</dbReference>
<dbReference type="PROSITE" id="PS01355">
    <property type="entry name" value="HEMATOPO_REC_S_F1"/>
    <property type="match status" value="1"/>
</dbReference>
<sequence length="459" mass="51456">MTILGTTFGVFFSLLQVVSGESGYAQNGDLEDAELDDYSFSCYSQLEVNGSQHSLTCAFEDPDVNTTNLEFEICGALVEVRCLNFRKLQEIYLIETKKFLLIGNSNICVKAGEKSLTCKNVNVATIVKPEAPFDLSVIYREGANDFLVTFNTSHLQKKYVKVLMHDVAYRHEKDENNWMHVNLSSTKLTLLQRKLQPKATYEIKVRSIPGDYFKGFWSEWSPSYYFRTPEINNHSGETNPTLLTISILSVLSVVLLVILACVLWKKRIKPIIWPSLPDHKKTLEHLCKKPSKNLIVSFNPESFLDCQIHRVDDIQARDEVEGFLQDTVPPQLEESETQRPGGDVQSPSWPSENVVTTPETFGRDSPLRCLAGNVSAHDAPILSSSRSLDCRESATNGPHVNQDLLLSLGTTNSTLPPSFPPQSRILTLNPVAQGQPILTFLGSNKEEAYVTMSSFCQKR</sequence>
<proteinExistence type="evidence at transcript level"/>
<organism>
    <name type="scientific">Callithrix jacchus</name>
    <name type="common">White-tufted-ear marmoset</name>
    <dbReference type="NCBI Taxonomy" id="9483"/>
    <lineage>
        <taxon>Eukaryota</taxon>
        <taxon>Metazoa</taxon>
        <taxon>Chordata</taxon>
        <taxon>Craniata</taxon>
        <taxon>Vertebrata</taxon>
        <taxon>Euteleostomi</taxon>
        <taxon>Mammalia</taxon>
        <taxon>Eutheria</taxon>
        <taxon>Euarchontoglires</taxon>
        <taxon>Primates</taxon>
        <taxon>Haplorrhini</taxon>
        <taxon>Platyrrhini</taxon>
        <taxon>Cebidae</taxon>
        <taxon>Callitrichinae</taxon>
        <taxon>Callithrix</taxon>
        <taxon>Callithrix</taxon>
    </lineage>
</organism>
<comment type="function">
    <text evidence="1">Receptor for interleukin-7. Also acts as a receptor for thymic stromal lymphopoietin (TSLP) (By similarity).</text>
</comment>
<comment type="subunit">
    <text evidence="2">The IL7 receptor is a heterodimer of IL7R and IL2RG. The TSLP receptor is a heterodimer of CRLF2 and IL7R. Interacts with CD53.</text>
</comment>
<comment type="subcellular location">
    <subcellularLocation>
        <location evidence="1">Cell membrane</location>
        <topology evidence="1">Single-pass type I membrane protein</topology>
    </subcellularLocation>
</comment>
<comment type="domain">
    <text evidence="1">The WSXWS motif appears to be necessary for proper protein folding and thereby efficient intracellular transport and cell-surface receptor binding.</text>
</comment>
<comment type="domain">
    <text evidence="1">The box 1 motif is required for JAK interaction and/or activation.</text>
</comment>
<comment type="PTM">
    <text evidence="1">N-glycosylated IL-7Ralpha binds IL7 300-fold more tightly than the unglycosylated form.</text>
</comment>
<comment type="PTM">
    <text evidence="2">Ubiquitinated by MARCHF8; leading to lysosomal degradation.</text>
</comment>
<comment type="similarity">
    <text evidence="6">Belongs to the type I cytokine receptor family. Type 4 subfamily.</text>
</comment>